<name>INA17_ZYGRC</name>
<comment type="function">
    <text evidence="1">Component of the INA complex (INAC) that promotes the biogenesis of mitochondrial F(1)F(0)-ATP synthase. INAC facilitates the assembly of the peripheral stalk and promotes the assembly of the catalytic F(1)-domain with the membrane-embedded F(0)-domain.</text>
</comment>
<comment type="subunit">
    <text evidence="1">Component of the inner membrane assembly (INA) complex, composed of INA17 and INA22. Interacts with a subset of F(1)F(0)-ATP synthase subunits of the F(1)-domain and the peripheral stalk.</text>
</comment>
<comment type="subcellular location">
    <subcellularLocation>
        <location evidence="1">Mitochondrion inner membrane</location>
        <topology evidence="2">Single-pass membrane protein</topology>
    </subcellularLocation>
</comment>
<comment type="similarity">
    <text evidence="4">Belongs to the INA17 family.</text>
</comment>
<feature type="transit peptide" description="Mitochondrion" evidence="2">
    <location>
        <begin position="1"/>
        <end position="28"/>
    </location>
</feature>
<feature type="chain" id="PRO_0000399887" description="Inner membrane assembly complex subunit 17" evidence="2">
    <location>
        <begin position="29"/>
        <end position="176"/>
    </location>
</feature>
<feature type="topological domain" description="Mitochondrial matrix" evidence="1">
    <location>
        <begin position="29"/>
        <end position="98"/>
    </location>
</feature>
<feature type="transmembrane region" description="Helical" evidence="2">
    <location>
        <begin position="99"/>
        <end position="121"/>
    </location>
</feature>
<feature type="topological domain" description="Mitochondrial intermembrane" evidence="1">
    <location>
        <begin position="122"/>
        <end position="176"/>
    </location>
</feature>
<feature type="region of interest" description="Disordered" evidence="3">
    <location>
        <begin position="149"/>
        <end position="168"/>
    </location>
</feature>
<feature type="coiled-coil region" evidence="2">
    <location>
        <begin position="123"/>
        <end position="151"/>
    </location>
</feature>
<feature type="compositionally biased region" description="Low complexity" evidence="3">
    <location>
        <begin position="149"/>
        <end position="163"/>
    </location>
</feature>
<gene>
    <name evidence="1" type="primary">INA17</name>
    <name type="ordered locus">ZYRO0F14828g</name>
</gene>
<proteinExistence type="inferred from homology"/>
<reference key="1">
    <citation type="journal article" date="2009" name="Genome Res.">
        <title>Comparative genomics of protoploid Saccharomycetaceae.</title>
        <authorList>
            <consortium name="The Genolevures Consortium"/>
            <person name="Souciet J.-L."/>
            <person name="Dujon B."/>
            <person name="Gaillardin C."/>
            <person name="Johnston M."/>
            <person name="Baret P.V."/>
            <person name="Cliften P."/>
            <person name="Sherman D.J."/>
            <person name="Weissenbach J."/>
            <person name="Westhof E."/>
            <person name="Wincker P."/>
            <person name="Jubin C."/>
            <person name="Poulain J."/>
            <person name="Barbe V."/>
            <person name="Segurens B."/>
            <person name="Artiguenave F."/>
            <person name="Anthouard V."/>
            <person name="Vacherie B."/>
            <person name="Val M.-E."/>
            <person name="Fulton R.S."/>
            <person name="Minx P."/>
            <person name="Wilson R."/>
            <person name="Durrens P."/>
            <person name="Jean G."/>
            <person name="Marck C."/>
            <person name="Martin T."/>
            <person name="Nikolski M."/>
            <person name="Rolland T."/>
            <person name="Seret M.-L."/>
            <person name="Casaregola S."/>
            <person name="Despons L."/>
            <person name="Fairhead C."/>
            <person name="Fischer G."/>
            <person name="Lafontaine I."/>
            <person name="Leh V."/>
            <person name="Lemaire M."/>
            <person name="de Montigny J."/>
            <person name="Neuveglise C."/>
            <person name="Thierry A."/>
            <person name="Blanc-Lenfle I."/>
            <person name="Bleykasten C."/>
            <person name="Diffels J."/>
            <person name="Fritsch E."/>
            <person name="Frangeul L."/>
            <person name="Goeffon A."/>
            <person name="Jauniaux N."/>
            <person name="Kachouri-Lafond R."/>
            <person name="Payen C."/>
            <person name="Potier S."/>
            <person name="Pribylova L."/>
            <person name="Ozanne C."/>
            <person name="Richard G.-F."/>
            <person name="Sacerdot C."/>
            <person name="Straub M.-L."/>
            <person name="Talla E."/>
        </authorList>
    </citation>
    <scope>NUCLEOTIDE SEQUENCE [LARGE SCALE GENOMIC DNA]</scope>
    <source>
        <strain>ATCC 2623 / CBS 732 / BCRC 21506 / NBRC 1130 / NCYC 568 / NRRL Y-229</strain>
    </source>
</reference>
<evidence type="ECO:0000250" key="1">
    <source>
        <dbReference type="UniProtKB" id="Q02888"/>
    </source>
</evidence>
<evidence type="ECO:0000255" key="2"/>
<evidence type="ECO:0000256" key="3">
    <source>
        <dbReference type="SAM" id="MobiDB-lite"/>
    </source>
</evidence>
<evidence type="ECO:0000305" key="4"/>
<organism>
    <name type="scientific">Zygosaccharomyces rouxii (strain ATCC 2623 / CBS 732 / NBRC 1130 / NCYC 568 / NRRL Y-229)</name>
    <dbReference type="NCBI Taxonomy" id="559307"/>
    <lineage>
        <taxon>Eukaryota</taxon>
        <taxon>Fungi</taxon>
        <taxon>Dikarya</taxon>
        <taxon>Ascomycota</taxon>
        <taxon>Saccharomycotina</taxon>
        <taxon>Saccharomycetes</taxon>
        <taxon>Saccharomycetales</taxon>
        <taxon>Saccharomycetaceae</taxon>
        <taxon>Zygosaccharomyces</taxon>
    </lineage>
</organism>
<keyword id="KW-0143">Chaperone</keyword>
<keyword id="KW-0175">Coiled coil</keyword>
<keyword id="KW-0472">Membrane</keyword>
<keyword id="KW-0496">Mitochondrion</keyword>
<keyword id="KW-0999">Mitochondrion inner membrane</keyword>
<keyword id="KW-1185">Reference proteome</keyword>
<keyword id="KW-0809">Transit peptide</keyword>
<keyword id="KW-0812">Transmembrane</keyword>
<keyword id="KW-1133">Transmembrane helix</keyword>
<dbReference type="EMBL" id="CU928178">
    <property type="protein sequence ID" value="CAR28912.1"/>
    <property type="molecule type" value="Genomic_DNA"/>
</dbReference>
<dbReference type="RefSeq" id="XP_002497845.1">
    <property type="nucleotide sequence ID" value="XM_002497800.1"/>
</dbReference>
<dbReference type="SMR" id="C5DYQ1"/>
<dbReference type="FunCoup" id="C5DYQ1">
    <property type="interactions" value="59"/>
</dbReference>
<dbReference type="GeneID" id="8205616"/>
<dbReference type="KEGG" id="zro:ZYRO0F14828g"/>
<dbReference type="HOGENOM" id="CLU_127263_1_0_1"/>
<dbReference type="InParanoid" id="C5DYQ1"/>
<dbReference type="Proteomes" id="UP000008536">
    <property type="component" value="Chromosome F"/>
</dbReference>
<dbReference type="GO" id="GO:0005743">
    <property type="term" value="C:mitochondrial inner membrane"/>
    <property type="evidence" value="ECO:0007669"/>
    <property type="project" value="UniProtKB-SubCell"/>
</dbReference>
<protein>
    <recommendedName>
        <fullName evidence="1">Inner membrane assembly complex subunit 17</fullName>
    </recommendedName>
</protein>
<accession>C5DYQ1</accession>
<sequence length="176" mass="20746">MLRVLPTSFKSISTRSAFRACQLSPLTVYCPLKSSQGTDIKSLEDLTKLKSLEGVDPELIRKLINERTIELNVQNELEMLKNLNKQEKMSQEVSLKRFVRPLWVFFLMSSTVYLILHYVWWKLEVVEKEKELQSHVESLEMELDQTLKSQNQNVSSSQNNGNNKTNDKPWYRKWFF</sequence>